<reference key="1">
    <citation type="journal article" date="2004" name="J. Infect. Dis.">
        <title>Progress toward characterization of the group A Streptococcus metagenome: complete genome sequence of a macrolide-resistant serotype M6 strain.</title>
        <authorList>
            <person name="Banks D.J."/>
            <person name="Porcella S.F."/>
            <person name="Barbian K.D."/>
            <person name="Beres S.B."/>
            <person name="Philips L.E."/>
            <person name="Voyich J.M."/>
            <person name="DeLeo F.R."/>
            <person name="Martin J.M."/>
            <person name="Somerville G.A."/>
            <person name="Musser J.M."/>
        </authorList>
    </citation>
    <scope>NUCLEOTIDE SEQUENCE [LARGE SCALE GENOMIC DNA]</scope>
    <source>
        <strain>ATCC BAA-946 / MGAS10394</strain>
    </source>
</reference>
<keyword id="KW-0963">Cytoplasm</keyword>
<keyword id="KW-0328">Glycosyltransferase</keyword>
<keyword id="KW-0660">Purine salvage</keyword>
<keyword id="KW-0808">Transferase</keyword>
<organism>
    <name type="scientific">Streptococcus pyogenes serotype M6 (strain ATCC BAA-946 / MGAS10394)</name>
    <dbReference type="NCBI Taxonomy" id="286636"/>
    <lineage>
        <taxon>Bacteria</taxon>
        <taxon>Bacillati</taxon>
        <taxon>Bacillota</taxon>
        <taxon>Bacilli</taxon>
        <taxon>Lactobacillales</taxon>
        <taxon>Streptococcaceae</taxon>
        <taxon>Streptococcus</taxon>
    </lineage>
</organism>
<gene>
    <name evidence="1" type="primary">apt</name>
    <name type="ordered locus">M6_Spy0754</name>
</gene>
<proteinExistence type="inferred from homology"/>
<comment type="function">
    <text evidence="1">Catalyzes a salvage reaction resulting in the formation of AMP, that is energically less costly than de novo synthesis.</text>
</comment>
<comment type="catalytic activity">
    <reaction evidence="1">
        <text>AMP + diphosphate = 5-phospho-alpha-D-ribose 1-diphosphate + adenine</text>
        <dbReference type="Rhea" id="RHEA:16609"/>
        <dbReference type="ChEBI" id="CHEBI:16708"/>
        <dbReference type="ChEBI" id="CHEBI:33019"/>
        <dbReference type="ChEBI" id="CHEBI:58017"/>
        <dbReference type="ChEBI" id="CHEBI:456215"/>
        <dbReference type="EC" id="2.4.2.7"/>
    </reaction>
</comment>
<comment type="pathway">
    <text evidence="1">Purine metabolism; AMP biosynthesis via salvage pathway; AMP from adenine: step 1/1.</text>
</comment>
<comment type="subunit">
    <text evidence="1">Homodimer.</text>
</comment>
<comment type="subcellular location">
    <subcellularLocation>
        <location evidence="1">Cytoplasm</location>
    </subcellularLocation>
</comment>
<comment type="similarity">
    <text evidence="1">Belongs to the purine/pyrimidine phosphoribosyltransferase family.</text>
</comment>
<dbReference type="EC" id="2.4.2.7" evidence="1"/>
<dbReference type="EMBL" id="CP000003">
    <property type="protein sequence ID" value="AAT86889.1"/>
    <property type="molecule type" value="Genomic_DNA"/>
</dbReference>
<dbReference type="RefSeq" id="WP_002990109.1">
    <property type="nucleotide sequence ID" value="NC_006086.1"/>
</dbReference>
<dbReference type="SMR" id="Q5XCH4"/>
<dbReference type="KEGG" id="spa:M6_Spy0754"/>
<dbReference type="HOGENOM" id="CLU_063339_3_0_9"/>
<dbReference type="UniPathway" id="UPA00588">
    <property type="reaction ID" value="UER00646"/>
</dbReference>
<dbReference type="Proteomes" id="UP000001167">
    <property type="component" value="Chromosome"/>
</dbReference>
<dbReference type="GO" id="GO:0005737">
    <property type="term" value="C:cytoplasm"/>
    <property type="evidence" value="ECO:0007669"/>
    <property type="project" value="UniProtKB-SubCell"/>
</dbReference>
<dbReference type="GO" id="GO:0002055">
    <property type="term" value="F:adenine binding"/>
    <property type="evidence" value="ECO:0007669"/>
    <property type="project" value="TreeGrafter"/>
</dbReference>
<dbReference type="GO" id="GO:0003999">
    <property type="term" value="F:adenine phosphoribosyltransferase activity"/>
    <property type="evidence" value="ECO:0007669"/>
    <property type="project" value="UniProtKB-UniRule"/>
</dbReference>
<dbReference type="GO" id="GO:0016208">
    <property type="term" value="F:AMP binding"/>
    <property type="evidence" value="ECO:0007669"/>
    <property type="project" value="TreeGrafter"/>
</dbReference>
<dbReference type="GO" id="GO:0006168">
    <property type="term" value="P:adenine salvage"/>
    <property type="evidence" value="ECO:0007669"/>
    <property type="project" value="InterPro"/>
</dbReference>
<dbReference type="GO" id="GO:0044209">
    <property type="term" value="P:AMP salvage"/>
    <property type="evidence" value="ECO:0007669"/>
    <property type="project" value="UniProtKB-UniRule"/>
</dbReference>
<dbReference type="GO" id="GO:0006166">
    <property type="term" value="P:purine ribonucleoside salvage"/>
    <property type="evidence" value="ECO:0007669"/>
    <property type="project" value="UniProtKB-KW"/>
</dbReference>
<dbReference type="CDD" id="cd06223">
    <property type="entry name" value="PRTases_typeI"/>
    <property type="match status" value="1"/>
</dbReference>
<dbReference type="FunFam" id="3.40.50.2020:FF:000004">
    <property type="entry name" value="Adenine phosphoribosyltransferase"/>
    <property type="match status" value="1"/>
</dbReference>
<dbReference type="Gene3D" id="3.40.50.2020">
    <property type="match status" value="1"/>
</dbReference>
<dbReference type="HAMAP" id="MF_00004">
    <property type="entry name" value="Aden_phosphoribosyltr"/>
    <property type="match status" value="1"/>
</dbReference>
<dbReference type="InterPro" id="IPR005764">
    <property type="entry name" value="Ade_phspho_trans"/>
</dbReference>
<dbReference type="InterPro" id="IPR000836">
    <property type="entry name" value="PRibTrfase_dom"/>
</dbReference>
<dbReference type="InterPro" id="IPR029057">
    <property type="entry name" value="PRTase-like"/>
</dbReference>
<dbReference type="InterPro" id="IPR050054">
    <property type="entry name" value="UPRTase/APRTase"/>
</dbReference>
<dbReference type="NCBIfam" id="TIGR01090">
    <property type="entry name" value="apt"/>
    <property type="match status" value="1"/>
</dbReference>
<dbReference type="NCBIfam" id="NF002633">
    <property type="entry name" value="PRK02304.1-2"/>
    <property type="match status" value="1"/>
</dbReference>
<dbReference type="NCBIfam" id="NF002634">
    <property type="entry name" value="PRK02304.1-3"/>
    <property type="match status" value="1"/>
</dbReference>
<dbReference type="NCBIfam" id="NF002636">
    <property type="entry name" value="PRK02304.1-5"/>
    <property type="match status" value="1"/>
</dbReference>
<dbReference type="PANTHER" id="PTHR32315">
    <property type="entry name" value="ADENINE PHOSPHORIBOSYLTRANSFERASE"/>
    <property type="match status" value="1"/>
</dbReference>
<dbReference type="PANTHER" id="PTHR32315:SF3">
    <property type="entry name" value="ADENINE PHOSPHORIBOSYLTRANSFERASE"/>
    <property type="match status" value="1"/>
</dbReference>
<dbReference type="Pfam" id="PF00156">
    <property type="entry name" value="Pribosyltran"/>
    <property type="match status" value="1"/>
</dbReference>
<dbReference type="SUPFAM" id="SSF53271">
    <property type="entry name" value="PRTase-like"/>
    <property type="match status" value="1"/>
</dbReference>
<dbReference type="PROSITE" id="PS00103">
    <property type="entry name" value="PUR_PYR_PR_TRANSFER"/>
    <property type="match status" value="1"/>
</dbReference>
<protein>
    <recommendedName>
        <fullName evidence="1">Adenine phosphoribosyltransferase</fullName>
        <shortName evidence="1">APRT</shortName>
        <ecNumber evidence="1">2.4.2.7</ecNumber>
    </recommendedName>
</protein>
<sequence>MDLTNYIASIKDYPKAGITFRDISPLMADGKAYSYAIREIAQYACDKDIDMVVGPEARGFIIGCPVAVELGIGFAPVRKPGKLPRDVVSADYEKEYGLDTLTMHADAIKPGQRVLIVDDLLATGGTVKATIEMIEKLGGIVAGCAFLIELEGLNGRHAIRNYDYKVLMQFPG</sequence>
<accession>Q5XCH4</accession>
<name>APT_STRP6</name>
<evidence type="ECO:0000255" key="1">
    <source>
        <dbReference type="HAMAP-Rule" id="MF_00004"/>
    </source>
</evidence>
<feature type="chain" id="PRO_0000149469" description="Adenine phosphoribosyltransferase">
    <location>
        <begin position="1"/>
        <end position="172"/>
    </location>
</feature>